<accession>Q4V7W8</accession>
<reference key="1">
    <citation type="submission" date="2005-06" db="EMBL/GenBank/DDBJ databases">
        <authorList>
            <consortium name="NIH - Xenopus Gene Collection (XGC) project"/>
        </authorList>
    </citation>
    <scope>NUCLEOTIDE SEQUENCE [LARGE SCALE MRNA]</scope>
    <source>
        <tissue>Oocyte</tissue>
    </source>
</reference>
<organism>
    <name type="scientific">Xenopus laevis</name>
    <name type="common">African clawed frog</name>
    <dbReference type="NCBI Taxonomy" id="8355"/>
    <lineage>
        <taxon>Eukaryota</taxon>
        <taxon>Metazoa</taxon>
        <taxon>Chordata</taxon>
        <taxon>Craniata</taxon>
        <taxon>Vertebrata</taxon>
        <taxon>Euteleostomi</taxon>
        <taxon>Amphibia</taxon>
        <taxon>Batrachia</taxon>
        <taxon>Anura</taxon>
        <taxon>Pipoidea</taxon>
        <taxon>Pipidae</taxon>
        <taxon>Xenopodinae</taxon>
        <taxon>Xenopus</taxon>
        <taxon>Xenopus</taxon>
    </lineage>
</organism>
<proteinExistence type="evidence at transcript level"/>
<gene>
    <name type="primary">etfbkmt</name>
    <name type="synonym">mettl20</name>
</gene>
<feature type="transit peptide" description="Mitochondrion" evidence="3">
    <location>
        <begin position="1"/>
        <end status="unknown"/>
    </location>
</feature>
<feature type="chain" id="PRO_0000318713" description="Electron transfer flavoprotein beta subunit lysine methyltransferase">
    <location>
        <begin status="unknown"/>
        <end position="246"/>
    </location>
</feature>
<sequence>MLRTARFLQRSISATSRPNCIVQPQRTSATCPRSFILQHTEATSDPLTPEIRLRLLTPRCDFWRQKPELWPYGDPYWAIYWPGGQALSRFLLDNPQIVRGGRVLDLGCGCGAAAIAAWMGGASYVLANDIDPVAGEAFRLNCELNNMKPLDFQAENLIGRETGPWSLIVLGDMFYDAELADLLCDWLRRSIRSHGTKVLIGDPGRAQFSSHPVLRHLQPLAQYSLSDSTKEENYGLTDSTVWSFEP</sequence>
<comment type="function">
    <text evidence="2">Protein-lysine methyltransferase that selectively trimethylates the flavoprotein ETFB in mitochondria. Thereby, may negatively regulate the function of ETFB in electron transfer from Acyl-CoA dehydrogenases to the main respiratory chain.</text>
</comment>
<comment type="catalytic activity">
    <reaction evidence="2">
        <text>L-lysyl-[protein] + 3 S-adenosyl-L-methionine = N(6),N(6),N(6)-trimethyl-L-lysyl-[protein] + 3 S-adenosyl-L-homocysteine + 3 H(+)</text>
        <dbReference type="Rhea" id="RHEA:54192"/>
        <dbReference type="Rhea" id="RHEA-COMP:9752"/>
        <dbReference type="Rhea" id="RHEA-COMP:13826"/>
        <dbReference type="ChEBI" id="CHEBI:15378"/>
        <dbReference type="ChEBI" id="CHEBI:29969"/>
        <dbReference type="ChEBI" id="CHEBI:57856"/>
        <dbReference type="ChEBI" id="CHEBI:59789"/>
        <dbReference type="ChEBI" id="CHEBI:61961"/>
    </reaction>
    <physiologicalReaction direction="left-to-right" evidence="2">
        <dbReference type="Rhea" id="RHEA:54193"/>
    </physiologicalReaction>
</comment>
<comment type="subcellular location">
    <subcellularLocation>
        <location evidence="2">Cytoplasm</location>
    </subcellularLocation>
    <subcellularLocation>
        <location evidence="2">Mitochondrion matrix</location>
    </subcellularLocation>
</comment>
<comment type="similarity">
    <text evidence="4">Belongs to the methyltransferase superfamily. ETFBKMT family.</text>
</comment>
<name>ETKMT_XENLA</name>
<keyword id="KW-0963">Cytoplasm</keyword>
<keyword id="KW-0489">Methyltransferase</keyword>
<keyword id="KW-0496">Mitochondrion</keyword>
<keyword id="KW-1185">Reference proteome</keyword>
<keyword id="KW-0808">Transferase</keyword>
<keyword id="KW-0809">Transit peptide</keyword>
<dbReference type="EC" id="2.1.1.-" evidence="1 2"/>
<dbReference type="EMBL" id="BC097686">
    <property type="protein sequence ID" value="AAH97686.1"/>
    <property type="molecule type" value="mRNA"/>
</dbReference>
<dbReference type="RefSeq" id="NP_001090037.1">
    <property type="nucleotide sequence ID" value="NM_001096568.1"/>
</dbReference>
<dbReference type="SMR" id="Q4V7W8"/>
<dbReference type="DNASU" id="735110"/>
<dbReference type="GeneID" id="735110"/>
<dbReference type="KEGG" id="xla:735110"/>
<dbReference type="AGR" id="Xenbase:XB-GENE-5901000"/>
<dbReference type="CTD" id="735110"/>
<dbReference type="Xenbase" id="XB-GENE-5901000">
    <property type="gene designation" value="etfbkmt.S"/>
</dbReference>
<dbReference type="OMA" id="RQENYGL"/>
<dbReference type="OrthoDB" id="194386at2759"/>
<dbReference type="Proteomes" id="UP000186698">
    <property type="component" value="Chromosome 3S"/>
</dbReference>
<dbReference type="Bgee" id="735110">
    <property type="expression patterns" value="Expressed in oocyte and 19 other cell types or tissues"/>
</dbReference>
<dbReference type="GO" id="GO:0005759">
    <property type="term" value="C:mitochondrial matrix"/>
    <property type="evidence" value="ECO:0000250"/>
    <property type="project" value="UniProtKB"/>
</dbReference>
<dbReference type="GO" id="GO:0016279">
    <property type="term" value="F:protein-lysine N-methyltransferase activity"/>
    <property type="evidence" value="ECO:0000250"/>
    <property type="project" value="UniProtKB"/>
</dbReference>
<dbReference type="GO" id="GO:0032259">
    <property type="term" value="P:methylation"/>
    <property type="evidence" value="ECO:0007669"/>
    <property type="project" value="UniProtKB-KW"/>
</dbReference>
<dbReference type="GO" id="GO:1904736">
    <property type="term" value="P:negative regulation of fatty acid beta-oxidation using acyl-CoA dehydrogenase"/>
    <property type="evidence" value="ECO:0000250"/>
    <property type="project" value="UniProtKB"/>
</dbReference>
<dbReference type="Gene3D" id="3.40.50.150">
    <property type="entry name" value="Vaccinia Virus protein VP39"/>
    <property type="match status" value="1"/>
</dbReference>
<dbReference type="InterPro" id="IPR050078">
    <property type="entry name" value="Ribosomal_L11_MeTrfase_PrmA"/>
</dbReference>
<dbReference type="InterPro" id="IPR029063">
    <property type="entry name" value="SAM-dependent_MTases_sf"/>
</dbReference>
<dbReference type="PANTHER" id="PTHR43648">
    <property type="entry name" value="ELECTRON TRANSFER FLAVOPROTEIN BETA SUBUNIT LYSINE METHYLTRANSFERASE"/>
    <property type="match status" value="1"/>
</dbReference>
<dbReference type="PANTHER" id="PTHR43648:SF1">
    <property type="entry name" value="ELECTRON TRANSFER FLAVOPROTEIN BETA SUBUNIT LYSINE METHYLTRANSFERASE"/>
    <property type="match status" value="1"/>
</dbReference>
<dbReference type="Pfam" id="PF06325">
    <property type="entry name" value="PrmA"/>
    <property type="match status" value="1"/>
</dbReference>
<dbReference type="SUPFAM" id="SSF53335">
    <property type="entry name" value="S-adenosyl-L-methionine-dependent methyltransferases"/>
    <property type="match status" value="1"/>
</dbReference>
<protein>
    <recommendedName>
        <fullName>Electron transfer flavoprotein beta subunit lysine methyltransferase</fullName>
        <ecNumber evidence="1 2">2.1.1.-</ecNumber>
    </recommendedName>
    <alternativeName>
        <fullName>ETFB lysine methyltransferase</fullName>
        <shortName>ETFB-KMT</shortName>
    </alternativeName>
    <alternativeName>
        <fullName>Protein N-lysine methyltransferase METTL20</fullName>
    </alternativeName>
</protein>
<evidence type="ECO:0000250" key="1">
    <source>
        <dbReference type="UniProtKB" id="Q80ZM3"/>
    </source>
</evidence>
<evidence type="ECO:0000250" key="2">
    <source>
        <dbReference type="UniProtKB" id="Q8IXQ9"/>
    </source>
</evidence>
<evidence type="ECO:0000255" key="3"/>
<evidence type="ECO:0000305" key="4"/>